<sequence length="671" mass="74672">MDKAQRIRRYQQLCDELHRHSRLYYTYDRPEITDAEYDRLFRELLELEKAYPELVTAASPSLRVGASPLSQFTPVPHSRPMLSLENALTEDELYDFDARIRKLLASDAPVRYVCELKMDGVAVELVYRDGILSVGSTRGDGTTGEGITENLRTIPSIPLVLSGEAPALLEVRGEVYIDLDDFQKLNHEREEEGLQVFANPRNAAAGSLRQLDSAVTAKRPLKIFCYGIGQLSGEHPASHHSLLKCMHRWGLRVNLEHSRTLEGIEQVTDYFRQLQQRRDELPYEIDGMVVKVDDLALQRELGEKTRTPRWAIACKFPPRQAVTVVEDIVLQVGRTGAITPVAQLKPVEVSGVTVSRASLHNWDEIARLDVLIGDTVVVERAGDVIPDVVKVLTEHRNGQERSVPLPQSCPACGGPVVKLEGEVVPRCQEMSCPARLRESIKHFVARRAMDIDGLGERTIEQLLKRELIKSVADLYHLTKEDLLLCERLADKSAEKLLTAIAASKTRPLGRFLFALGIRHVGEHLASLLARQFGSLDALSHATREELLAIHEIGPQVADSVTDFFAKSRNREILAALQRAGVAPQAEEKRSGGPLTGKSFVFTGSLTRFSRKQAQEMVERLGGRASGSVSKKTDCVVAGEAAGSKLEKARQLNIQILSEEEFLQMIDTLEEA</sequence>
<organism>
    <name type="scientific">Syntrophotalea carbinolica (strain DSM 2380 / NBRC 103641 / GraBd1)</name>
    <name type="common">Pelobacter carbinolicus</name>
    <dbReference type="NCBI Taxonomy" id="338963"/>
    <lineage>
        <taxon>Bacteria</taxon>
        <taxon>Pseudomonadati</taxon>
        <taxon>Thermodesulfobacteriota</taxon>
        <taxon>Desulfuromonadia</taxon>
        <taxon>Desulfuromonadales</taxon>
        <taxon>Syntrophotaleaceae</taxon>
        <taxon>Syntrophotalea</taxon>
    </lineage>
</organism>
<name>DNLJ_SYNC1</name>
<dbReference type="EC" id="6.5.1.2" evidence="1"/>
<dbReference type="EMBL" id="CP000142">
    <property type="protein sequence ID" value="ABA89452.1"/>
    <property type="molecule type" value="Genomic_DNA"/>
</dbReference>
<dbReference type="RefSeq" id="WP_011341967.1">
    <property type="nucleotide sequence ID" value="NC_007498.2"/>
</dbReference>
<dbReference type="SMR" id="Q3A2F5"/>
<dbReference type="STRING" id="338963.Pcar_2213"/>
<dbReference type="KEGG" id="pca:Pcar_2213"/>
<dbReference type="eggNOG" id="COG0272">
    <property type="taxonomic scope" value="Bacteria"/>
</dbReference>
<dbReference type="HOGENOM" id="CLU_007764_2_1_7"/>
<dbReference type="OrthoDB" id="9759736at2"/>
<dbReference type="Proteomes" id="UP000002534">
    <property type="component" value="Chromosome"/>
</dbReference>
<dbReference type="GO" id="GO:0005829">
    <property type="term" value="C:cytosol"/>
    <property type="evidence" value="ECO:0007669"/>
    <property type="project" value="TreeGrafter"/>
</dbReference>
<dbReference type="GO" id="GO:0003677">
    <property type="term" value="F:DNA binding"/>
    <property type="evidence" value="ECO:0007669"/>
    <property type="project" value="InterPro"/>
</dbReference>
<dbReference type="GO" id="GO:0003911">
    <property type="term" value="F:DNA ligase (NAD+) activity"/>
    <property type="evidence" value="ECO:0007669"/>
    <property type="project" value="UniProtKB-UniRule"/>
</dbReference>
<dbReference type="GO" id="GO:0046872">
    <property type="term" value="F:metal ion binding"/>
    <property type="evidence" value="ECO:0007669"/>
    <property type="project" value="UniProtKB-KW"/>
</dbReference>
<dbReference type="GO" id="GO:0006281">
    <property type="term" value="P:DNA repair"/>
    <property type="evidence" value="ECO:0007669"/>
    <property type="project" value="UniProtKB-KW"/>
</dbReference>
<dbReference type="GO" id="GO:0006260">
    <property type="term" value="P:DNA replication"/>
    <property type="evidence" value="ECO:0007669"/>
    <property type="project" value="UniProtKB-KW"/>
</dbReference>
<dbReference type="CDD" id="cd17748">
    <property type="entry name" value="BRCT_DNA_ligase_like"/>
    <property type="match status" value="1"/>
</dbReference>
<dbReference type="CDD" id="cd00114">
    <property type="entry name" value="LIGANc"/>
    <property type="match status" value="1"/>
</dbReference>
<dbReference type="FunFam" id="1.10.150.20:FF:000006">
    <property type="entry name" value="DNA ligase"/>
    <property type="match status" value="1"/>
</dbReference>
<dbReference type="FunFam" id="1.10.150.20:FF:000007">
    <property type="entry name" value="DNA ligase"/>
    <property type="match status" value="1"/>
</dbReference>
<dbReference type="FunFam" id="2.40.50.140:FF:000012">
    <property type="entry name" value="DNA ligase"/>
    <property type="match status" value="1"/>
</dbReference>
<dbReference type="FunFam" id="3.30.470.30:FF:000001">
    <property type="entry name" value="DNA ligase"/>
    <property type="match status" value="1"/>
</dbReference>
<dbReference type="Gene3D" id="6.20.10.30">
    <property type="match status" value="1"/>
</dbReference>
<dbReference type="Gene3D" id="1.10.150.20">
    <property type="entry name" value="5' to 3' exonuclease, C-terminal subdomain"/>
    <property type="match status" value="2"/>
</dbReference>
<dbReference type="Gene3D" id="3.40.50.10190">
    <property type="entry name" value="BRCT domain"/>
    <property type="match status" value="1"/>
</dbReference>
<dbReference type="Gene3D" id="3.30.470.30">
    <property type="entry name" value="DNA ligase/mRNA capping enzyme"/>
    <property type="match status" value="1"/>
</dbReference>
<dbReference type="Gene3D" id="1.10.287.610">
    <property type="entry name" value="Helix hairpin bin"/>
    <property type="match status" value="1"/>
</dbReference>
<dbReference type="Gene3D" id="2.40.50.140">
    <property type="entry name" value="Nucleic acid-binding proteins"/>
    <property type="match status" value="1"/>
</dbReference>
<dbReference type="HAMAP" id="MF_01588">
    <property type="entry name" value="DNA_ligase_A"/>
    <property type="match status" value="1"/>
</dbReference>
<dbReference type="InterPro" id="IPR001357">
    <property type="entry name" value="BRCT_dom"/>
</dbReference>
<dbReference type="InterPro" id="IPR036420">
    <property type="entry name" value="BRCT_dom_sf"/>
</dbReference>
<dbReference type="InterPro" id="IPR041663">
    <property type="entry name" value="DisA/LigA_HHH"/>
</dbReference>
<dbReference type="InterPro" id="IPR001679">
    <property type="entry name" value="DNA_ligase"/>
</dbReference>
<dbReference type="InterPro" id="IPR033136">
    <property type="entry name" value="DNA_ligase_CS"/>
</dbReference>
<dbReference type="InterPro" id="IPR013839">
    <property type="entry name" value="DNAligase_adenylation"/>
</dbReference>
<dbReference type="InterPro" id="IPR013840">
    <property type="entry name" value="DNAligase_N"/>
</dbReference>
<dbReference type="InterPro" id="IPR003583">
    <property type="entry name" value="Hlx-hairpin-Hlx_DNA-bd_motif"/>
</dbReference>
<dbReference type="InterPro" id="IPR012340">
    <property type="entry name" value="NA-bd_OB-fold"/>
</dbReference>
<dbReference type="InterPro" id="IPR004150">
    <property type="entry name" value="NAD_DNA_ligase_OB"/>
</dbReference>
<dbReference type="InterPro" id="IPR010994">
    <property type="entry name" value="RuvA_2-like"/>
</dbReference>
<dbReference type="InterPro" id="IPR004149">
    <property type="entry name" value="Znf_DNAligase_C4"/>
</dbReference>
<dbReference type="NCBIfam" id="TIGR00575">
    <property type="entry name" value="dnlj"/>
    <property type="match status" value="1"/>
</dbReference>
<dbReference type="NCBIfam" id="NF005932">
    <property type="entry name" value="PRK07956.1"/>
    <property type="match status" value="1"/>
</dbReference>
<dbReference type="PANTHER" id="PTHR23389">
    <property type="entry name" value="CHROMOSOME TRANSMISSION FIDELITY FACTOR 18"/>
    <property type="match status" value="1"/>
</dbReference>
<dbReference type="PANTHER" id="PTHR23389:SF9">
    <property type="entry name" value="DNA LIGASE"/>
    <property type="match status" value="1"/>
</dbReference>
<dbReference type="Pfam" id="PF00533">
    <property type="entry name" value="BRCT"/>
    <property type="match status" value="1"/>
</dbReference>
<dbReference type="Pfam" id="PF01653">
    <property type="entry name" value="DNA_ligase_aden"/>
    <property type="match status" value="1"/>
</dbReference>
<dbReference type="Pfam" id="PF03120">
    <property type="entry name" value="DNA_ligase_OB"/>
    <property type="match status" value="1"/>
</dbReference>
<dbReference type="Pfam" id="PF03119">
    <property type="entry name" value="DNA_ligase_ZBD"/>
    <property type="match status" value="1"/>
</dbReference>
<dbReference type="Pfam" id="PF12826">
    <property type="entry name" value="HHH_2"/>
    <property type="match status" value="1"/>
</dbReference>
<dbReference type="Pfam" id="PF14520">
    <property type="entry name" value="HHH_5"/>
    <property type="match status" value="1"/>
</dbReference>
<dbReference type="Pfam" id="PF22745">
    <property type="entry name" value="Nlig-Ia"/>
    <property type="match status" value="1"/>
</dbReference>
<dbReference type="PIRSF" id="PIRSF001604">
    <property type="entry name" value="LigA"/>
    <property type="match status" value="1"/>
</dbReference>
<dbReference type="SMART" id="SM00292">
    <property type="entry name" value="BRCT"/>
    <property type="match status" value="1"/>
</dbReference>
<dbReference type="SMART" id="SM00278">
    <property type="entry name" value="HhH1"/>
    <property type="match status" value="3"/>
</dbReference>
<dbReference type="SMART" id="SM00532">
    <property type="entry name" value="LIGANc"/>
    <property type="match status" value="1"/>
</dbReference>
<dbReference type="SUPFAM" id="SSF52113">
    <property type="entry name" value="BRCT domain"/>
    <property type="match status" value="1"/>
</dbReference>
<dbReference type="SUPFAM" id="SSF56091">
    <property type="entry name" value="DNA ligase/mRNA capping enzyme, catalytic domain"/>
    <property type="match status" value="1"/>
</dbReference>
<dbReference type="SUPFAM" id="SSF50249">
    <property type="entry name" value="Nucleic acid-binding proteins"/>
    <property type="match status" value="1"/>
</dbReference>
<dbReference type="SUPFAM" id="SSF47781">
    <property type="entry name" value="RuvA domain 2-like"/>
    <property type="match status" value="1"/>
</dbReference>
<dbReference type="PROSITE" id="PS50172">
    <property type="entry name" value="BRCT"/>
    <property type="match status" value="1"/>
</dbReference>
<dbReference type="PROSITE" id="PS01056">
    <property type="entry name" value="DNA_LIGASE_N2"/>
    <property type="match status" value="1"/>
</dbReference>
<feature type="chain" id="PRO_0000313356" description="DNA ligase">
    <location>
        <begin position="1"/>
        <end position="671"/>
    </location>
</feature>
<feature type="domain" description="BRCT" evidence="1">
    <location>
        <begin position="589"/>
        <end position="671"/>
    </location>
</feature>
<feature type="active site" description="N6-AMP-lysine intermediate" evidence="1">
    <location>
        <position position="117"/>
    </location>
</feature>
<feature type="binding site" evidence="1">
    <location>
        <begin position="34"/>
        <end position="38"/>
    </location>
    <ligand>
        <name>NAD(+)</name>
        <dbReference type="ChEBI" id="CHEBI:57540"/>
    </ligand>
</feature>
<feature type="binding site" evidence="1">
    <location>
        <begin position="83"/>
        <end position="84"/>
    </location>
    <ligand>
        <name>NAD(+)</name>
        <dbReference type="ChEBI" id="CHEBI:57540"/>
    </ligand>
</feature>
<feature type="binding site" evidence="1">
    <location>
        <position position="115"/>
    </location>
    <ligand>
        <name>NAD(+)</name>
        <dbReference type="ChEBI" id="CHEBI:57540"/>
    </ligand>
</feature>
<feature type="binding site" evidence="1">
    <location>
        <position position="138"/>
    </location>
    <ligand>
        <name>NAD(+)</name>
        <dbReference type="ChEBI" id="CHEBI:57540"/>
    </ligand>
</feature>
<feature type="binding site" evidence="1">
    <location>
        <position position="174"/>
    </location>
    <ligand>
        <name>NAD(+)</name>
        <dbReference type="ChEBI" id="CHEBI:57540"/>
    </ligand>
</feature>
<feature type="binding site" evidence="1">
    <location>
        <position position="291"/>
    </location>
    <ligand>
        <name>NAD(+)</name>
        <dbReference type="ChEBI" id="CHEBI:57540"/>
    </ligand>
</feature>
<feature type="binding site" evidence="1">
    <location>
        <position position="315"/>
    </location>
    <ligand>
        <name>NAD(+)</name>
        <dbReference type="ChEBI" id="CHEBI:57540"/>
    </ligand>
</feature>
<feature type="binding site" evidence="1">
    <location>
        <position position="409"/>
    </location>
    <ligand>
        <name>Zn(2+)</name>
        <dbReference type="ChEBI" id="CHEBI:29105"/>
    </ligand>
</feature>
<feature type="binding site" evidence="1">
    <location>
        <position position="412"/>
    </location>
    <ligand>
        <name>Zn(2+)</name>
        <dbReference type="ChEBI" id="CHEBI:29105"/>
    </ligand>
</feature>
<feature type="binding site" evidence="1">
    <location>
        <position position="427"/>
    </location>
    <ligand>
        <name>Zn(2+)</name>
        <dbReference type="ChEBI" id="CHEBI:29105"/>
    </ligand>
</feature>
<feature type="binding site" evidence="1">
    <location>
        <position position="432"/>
    </location>
    <ligand>
        <name>Zn(2+)</name>
        <dbReference type="ChEBI" id="CHEBI:29105"/>
    </ligand>
</feature>
<evidence type="ECO:0000255" key="1">
    <source>
        <dbReference type="HAMAP-Rule" id="MF_01588"/>
    </source>
</evidence>
<comment type="function">
    <text evidence="1">DNA ligase that catalyzes the formation of phosphodiester linkages between 5'-phosphoryl and 3'-hydroxyl groups in double-stranded DNA using NAD as a coenzyme and as the energy source for the reaction. It is essential for DNA replication and repair of damaged DNA.</text>
</comment>
<comment type="catalytic activity">
    <reaction evidence="1">
        <text>NAD(+) + (deoxyribonucleotide)n-3'-hydroxyl + 5'-phospho-(deoxyribonucleotide)m = (deoxyribonucleotide)n+m + AMP + beta-nicotinamide D-nucleotide.</text>
        <dbReference type="EC" id="6.5.1.2"/>
    </reaction>
</comment>
<comment type="cofactor">
    <cofactor evidence="1">
        <name>Mg(2+)</name>
        <dbReference type="ChEBI" id="CHEBI:18420"/>
    </cofactor>
    <cofactor evidence="1">
        <name>Mn(2+)</name>
        <dbReference type="ChEBI" id="CHEBI:29035"/>
    </cofactor>
</comment>
<comment type="similarity">
    <text evidence="1">Belongs to the NAD-dependent DNA ligase family. LigA subfamily.</text>
</comment>
<reference key="1">
    <citation type="submission" date="2005-10" db="EMBL/GenBank/DDBJ databases">
        <title>Complete sequence of Pelobacter carbinolicus DSM 2380.</title>
        <authorList>
            <person name="Copeland A."/>
            <person name="Lucas S."/>
            <person name="Lapidus A."/>
            <person name="Barry K."/>
            <person name="Detter J.C."/>
            <person name="Glavina T."/>
            <person name="Hammon N."/>
            <person name="Israni S."/>
            <person name="Pitluck S."/>
            <person name="Chertkov O."/>
            <person name="Schmutz J."/>
            <person name="Larimer F."/>
            <person name="Land M."/>
            <person name="Kyrpides N."/>
            <person name="Ivanova N."/>
            <person name="Richardson P."/>
        </authorList>
    </citation>
    <scope>NUCLEOTIDE SEQUENCE [LARGE SCALE GENOMIC DNA]</scope>
    <source>
        <strain>DSM 2380 / NBRC 103641 / GraBd1</strain>
    </source>
</reference>
<proteinExistence type="inferred from homology"/>
<accession>Q3A2F5</accession>
<gene>
    <name evidence="1" type="primary">ligA</name>
    <name type="ordered locus">Pcar_2213</name>
</gene>
<keyword id="KW-0227">DNA damage</keyword>
<keyword id="KW-0234">DNA repair</keyword>
<keyword id="KW-0235">DNA replication</keyword>
<keyword id="KW-0436">Ligase</keyword>
<keyword id="KW-0460">Magnesium</keyword>
<keyword id="KW-0464">Manganese</keyword>
<keyword id="KW-0479">Metal-binding</keyword>
<keyword id="KW-0520">NAD</keyword>
<keyword id="KW-1185">Reference proteome</keyword>
<keyword id="KW-0862">Zinc</keyword>
<protein>
    <recommendedName>
        <fullName evidence="1">DNA ligase</fullName>
        <ecNumber evidence="1">6.5.1.2</ecNumber>
    </recommendedName>
    <alternativeName>
        <fullName evidence="1">Polydeoxyribonucleotide synthase [NAD(+)]</fullName>
    </alternativeName>
</protein>